<protein>
    <recommendedName>
        <fullName evidence="3">Cyclic di-GMP binding protein BcsE</fullName>
    </recommendedName>
    <alternativeName>
        <fullName>Cellulose biosynthesis protein BcsE</fullName>
    </alternativeName>
</protein>
<dbReference type="EMBL" id="U00039">
    <property type="protein sequence ID" value="AAB18514.1"/>
    <property type="molecule type" value="Genomic_DNA"/>
</dbReference>
<dbReference type="EMBL" id="U00096">
    <property type="protein sequence ID" value="AAC76561.1"/>
    <property type="molecule type" value="Genomic_DNA"/>
</dbReference>
<dbReference type="EMBL" id="AP009048">
    <property type="protein sequence ID" value="BAE77759.1"/>
    <property type="molecule type" value="Genomic_DNA"/>
</dbReference>
<dbReference type="PIR" id="S47758">
    <property type="entry name" value="S47758"/>
</dbReference>
<dbReference type="RefSeq" id="NP_417993.1">
    <property type="nucleotide sequence ID" value="NC_000913.3"/>
</dbReference>
<dbReference type="RefSeq" id="WP_001204931.1">
    <property type="nucleotide sequence ID" value="NZ_STEB01000018.1"/>
</dbReference>
<dbReference type="PDB" id="6TJ0">
    <property type="method" value="X-ray"/>
    <property type="resolution" value="2.20 A"/>
    <property type="chains" value="A/B=217-523"/>
</dbReference>
<dbReference type="PDB" id="6YBB">
    <property type="method" value="X-ray"/>
    <property type="resolution" value="2.90 A"/>
    <property type="chains" value="E/F=217-523"/>
</dbReference>
<dbReference type="PDB" id="6YBU">
    <property type="method" value="X-ray"/>
    <property type="resolution" value="2.49 A"/>
    <property type="chains" value="E/F/K/L=349-523"/>
</dbReference>
<dbReference type="PDB" id="9FNN">
    <property type="method" value="EM"/>
    <property type="resolution" value="2.85 A"/>
    <property type="chains" value="E/U=1-523"/>
</dbReference>
<dbReference type="PDB" id="9FO7">
    <property type="method" value="EM"/>
    <property type="resolution" value="2.85 A"/>
    <property type="chains" value="E/U=1-523"/>
</dbReference>
<dbReference type="PDB" id="9FP0">
    <property type="method" value="EM"/>
    <property type="resolution" value="3.37 A"/>
    <property type="chains" value="D/E=1-523"/>
</dbReference>
<dbReference type="PDB" id="9FP2">
    <property type="method" value="EM"/>
    <property type="resolution" value="3.76 A"/>
    <property type="chains" value="D/E=1-523"/>
</dbReference>
<dbReference type="PDBsum" id="6TJ0"/>
<dbReference type="PDBsum" id="6YBB"/>
<dbReference type="PDBsum" id="6YBU"/>
<dbReference type="PDBsum" id="9FNN"/>
<dbReference type="PDBsum" id="9FO7"/>
<dbReference type="PDBsum" id="9FP0"/>
<dbReference type="PDBsum" id="9FP2"/>
<dbReference type="SMR" id="P37657"/>
<dbReference type="BioGRID" id="4260852">
    <property type="interactions" value="5"/>
</dbReference>
<dbReference type="DIP" id="DIP-12390N"/>
<dbReference type="FunCoup" id="P37657">
    <property type="interactions" value="26"/>
</dbReference>
<dbReference type="IntAct" id="P37657">
    <property type="interactions" value="4"/>
</dbReference>
<dbReference type="STRING" id="511145.b3536"/>
<dbReference type="PaxDb" id="511145-b3536"/>
<dbReference type="EnsemblBacteria" id="AAC76561">
    <property type="protein sequence ID" value="AAC76561"/>
    <property type="gene ID" value="b3536"/>
</dbReference>
<dbReference type="GeneID" id="75201984"/>
<dbReference type="GeneID" id="948050"/>
<dbReference type="KEGG" id="ecj:JW3504"/>
<dbReference type="KEGG" id="eco:b3536"/>
<dbReference type="PATRIC" id="fig|511145.12.peg.3647"/>
<dbReference type="EchoBASE" id="EB2172"/>
<dbReference type="eggNOG" id="ENOG502Z9EC">
    <property type="taxonomic scope" value="Bacteria"/>
</dbReference>
<dbReference type="HOGENOM" id="CLU_039389_2_0_6"/>
<dbReference type="InParanoid" id="P37657"/>
<dbReference type="OMA" id="GCGANMV"/>
<dbReference type="OrthoDB" id="5840260at2"/>
<dbReference type="BioCyc" id="EcoCyc:EG12263-MONOMER"/>
<dbReference type="PRO" id="PR:P37657"/>
<dbReference type="Proteomes" id="UP000000625">
    <property type="component" value="Chromosome"/>
</dbReference>
<dbReference type="GO" id="GO:0035438">
    <property type="term" value="F:cyclic-di-GMP binding"/>
    <property type="evidence" value="ECO:0000314"/>
    <property type="project" value="EcoCyc"/>
</dbReference>
<dbReference type="GO" id="GO:0030244">
    <property type="term" value="P:cellulose biosynthetic process"/>
    <property type="evidence" value="ECO:0007669"/>
    <property type="project" value="UniProtKB-KW"/>
</dbReference>
<dbReference type="InterPro" id="IPR017745">
    <property type="entry name" value="BcsE"/>
</dbReference>
<dbReference type="NCBIfam" id="TIGR03369">
    <property type="entry name" value="cellulose_bcsE"/>
    <property type="match status" value="1"/>
</dbReference>
<dbReference type="NCBIfam" id="NF011619">
    <property type="entry name" value="PRK15045.1"/>
    <property type="match status" value="1"/>
</dbReference>
<dbReference type="Pfam" id="PF10995">
    <property type="entry name" value="CBP_BcsE"/>
    <property type="match status" value="1"/>
</dbReference>
<evidence type="ECO:0000269" key="1">
    <source>
    </source>
</evidence>
<evidence type="ECO:0000269" key="2">
    <source>
    </source>
</evidence>
<evidence type="ECO:0000303" key="3">
    <source>
    </source>
</evidence>
<evidence type="ECO:0000305" key="4"/>
<evidence type="ECO:0000305" key="5">
    <source>
    </source>
</evidence>
<evidence type="ECO:0007829" key="6">
    <source>
        <dbReference type="PDB" id="6TJ0"/>
    </source>
</evidence>
<evidence type="ECO:0007829" key="7">
    <source>
        <dbReference type="PDB" id="6YBU"/>
    </source>
</evidence>
<evidence type="ECO:0007829" key="8">
    <source>
        <dbReference type="PDB" id="9FNN"/>
    </source>
</evidence>
<evidence type="ECO:0007829" key="9">
    <source>
        <dbReference type="PDB" id="9FO7"/>
    </source>
</evidence>
<evidence type="ECO:0007829" key="10">
    <source>
        <dbReference type="PDB" id="9FP0"/>
    </source>
</evidence>
<name>BCSE_ECOLI</name>
<proteinExistence type="evidence at protein level"/>
<comment type="function">
    <text evidence="2">Binds bis-(3'-5') cyclic diguanylic acid (c-di-GMP), the ability to bind c-di-GMP is important for its function (PubMed:24942809).</text>
</comment>
<comment type="domain">
    <text evidence="2">The central domain (GIL, residues 153-492) is sufficient for c-di-GMP binding.</text>
</comment>
<comment type="disruption phenotype">
    <text evidence="1">When the bcsEFG operon is disrupted in a cellulose-synthesizing strain (a strain K12 / W3110 derivative called AR3110 with a restored, functional bcsQ gene), cellulose is no longer made.</text>
</comment>
<comment type="miscellaneous">
    <text evidence="5">Cellulose production is abolished in E.coli K12 / MG1655 and W3110 due to a premature stop codon in bcsQ (PubMed:24097954).</text>
</comment>
<comment type="similarity">
    <text evidence="4">Belongs to the BcsE family.</text>
</comment>
<keyword id="KW-0002">3D-structure</keyword>
<keyword id="KW-0135">Cellulose biosynthesis</keyword>
<keyword id="KW-0547">Nucleotide-binding</keyword>
<keyword id="KW-1185">Reference proteome</keyword>
<organism>
    <name type="scientific">Escherichia coli (strain K12)</name>
    <dbReference type="NCBI Taxonomy" id="83333"/>
    <lineage>
        <taxon>Bacteria</taxon>
        <taxon>Pseudomonadati</taxon>
        <taxon>Pseudomonadota</taxon>
        <taxon>Gammaproteobacteria</taxon>
        <taxon>Enterobacterales</taxon>
        <taxon>Enterobacteriaceae</taxon>
        <taxon>Escherichia</taxon>
    </lineage>
</organism>
<sequence length="523" mass="59428">MRDIVDPVFSIGISSLWDELRHMPAGGVWWFNVDRHEDAISLANQTIASQAETAHVAVISMDSDPAKIFQLDDSQGPEKIKLFSMLNHEKGLYYLTRDLQCSIDPHNYLFILVCANNAWQNIPAERLRSWLDKMNKWSRLNHCSLLVINPGNNNDKQFSLLLEEYRSLFGLASLRFQGDQHLLDIAFWCNEKGVSARQQLSVQQQNGIWTLVQSEEAEIQPRSDEKRILSNVAVLEGAPPLSEHWQLFNNNEVLFNEARTAQAATVVFSLQQNAQIEPLARSIHTLRRQRGSAMKILVRENTASLRATDERLLLACGANMVIPWNAPLSRCLTMIESVQGQKFSRYVPEDITTLLSMTQPLKLRGFQKWDVFCNAVNNMMNNPLLPAHGKGVLVALRPVPGIRVEQALTLCRPNRTGDIMTIGGNRLVLFLSFCRINDLDTALNHIFPLPTGDIFSNRMVWFEDDQISAELVQMRLLAPEQWGMPLPLTQSSKPVINAEHDGRHWRRIPEPMRLLDDAVERSS</sequence>
<reference key="1">
    <citation type="journal article" date="1994" name="Nucleic Acids Res.">
        <title>Analysis of the Escherichia coli genome. V. DNA sequence of the region from 76.0 to 81.5 minutes.</title>
        <authorList>
            <person name="Sofia H.J."/>
            <person name="Burland V."/>
            <person name="Daniels D.L."/>
            <person name="Plunkett G. III"/>
            <person name="Blattner F.R."/>
        </authorList>
    </citation>
    <scope>NUCLEOTIDE SEQUENCE [LARGE SCALE GENOMIC DNA]</scope>
    <source>
        <strain>K12 / MG1655 / ATCC 47076</strain>
    </source>
</reference>
<reference key="2">
    <citation type="journal article" date="1997" name="Science">
        <title>The complete genome sequence of Escherichia coli K-12.</title>
        <authorList>
            <person name="Blattner F.R."/>
            <person name="Plunkett G. III"/>
            <person name="Bloch C.A."/>
            <person name="Perna N.T."/>
            <person name="Burland V."/>
            <person name="Riley M."/>
            <person name="Collado-Vides J."/>
            <person name="Glasner J.D."/>
            <person name="Rode C.K."/>
            <person name="Mayhew G.F."/>
            <person name="Gregor J."/>
            <person name="Davis N.W."/>
            <person name="Kirkpatrick H.A."/>
            <person name="Goeden M.A."/>
            <person name="Rose D.J."/>
            <person name="Mau B."/>
            <person name="Shao Y."/>
        </authorList>
    </citation>
    <scope>NUCLEOTIDE SEQUENCE [LARGE SCALE GENOMIC DNA]</scope>
    <source>
        <strain>K12 / MG1655 / ATCC 47076</strain>
    </source>
</reference>
<reference key="3">
    <citation type="journal article" date="2006" name="Mol. Syst. Biol.">
        <title>Highly accurate genome sequences of Escherichia coli K-12 strains MG1655 and W3110.</title>
        <authorList>
            <person name="Hayashi K."/>
            <person name="Morooka N."/>
            <person name="Yamamoto Y."/>
            <person name="Fujita K."/>
            <person name="Isono K."/>
            <person name="Choi S."/>
            <person name="Ohtsubo E."/>
            <person name="Baba T."/>
            <person name="Wanner B.L."/>
            <person name="Mori H."/>
            <person name="Horiuchi T."/>
        </authorList>
    </citation>
    <scope>NUCLEOTIDE SEQUENCE [LARGE SCALE GENOMIC DNA]</scope>
    <source>
        <strain>K12 / W3110 / ATCC 27325 / DSM 5911</strain>
    </source>
</reference>
<reference key="4">
    <citation type="journal article" date="2013" name="J. Bacteriol.">
        <title>Cellulose as an architectural element in spatially structured Escherichia coli biofilms.</title>
        <authorList>
            <person name="Serra D.O."/>
            <person name="Richter A.M."/>
            <person name="Hengge R."/>
        </authorList>
    </citation>
    <scope>DISRUPTION PHENOTYPE</scope>
    <source>
        <strain>K12 / W3110 / AR3110</strain>
    </source>
</reference>
<reference key="5">
    <citation type="journal article" date="2014" name="Mol. Microbiol.">
        <title>GIL, a new c-di-GMP-binding protein domain involved in regulation of cellulose synthesis in enterobacteria.</title>
        <authorList>
            <person name="Fang X."/>
            <person name="Ahmad I."/>
            <person name="Blanka A."/>
            <person name="Schottkowski M."/>
            <person name="Cimdins A."/>
            <person name="Galperin M.Y."/>
            <person name="Roemling U."/>
            <person name="Gomelsky M."/>
        </authorList>
    </citation>
    <scope>FUNCTION</scope>
    <scope>C-DI-GMP-BINDING</scope>
    <scope>DOMAIN</scope>
    <scope>MUTAGENESIS OF ARG-139; ARG-287; ARG-306; ARG-364; ARG-415 AND ASP-418</scope>
    <source>
        <strain>K12 / MG1655 / ATCC 47076</strain>
    </source>
</reference>
<feature type="chain" id="PRO_0000169580" description="Cyclic di-GMP binding protein BcsE">
    <location>
        <begin position="1"/>
        <end position="523"/>
    </location>
</feature>
<feature type="region of interest" description="GIL domain, sufficient for c-di-GMP binding" evidence="2">
    <location>
        <begin position="153"/>
        <end position="492"/>
    </location>
</feature>
<feature type="mutagenesis site" description="Wild-type c-di-GMP binding, complements a bcsE deletion in S.typhimurium 14028." evidence="2">
    <original>R</original>
    <variation>D</variation>
    <location>
        <position position="139"/>
    </location>
</feature>
<feature type="mutagenesis site" description="Wild-type c-di-GMP binding." evidence="2">
    <original>R</original>
    <variation>D</variation>
    <location>
        <position position="287"/>
    </location>
</feature>
<feature type="mutagenesis site" description="Wild-type c-di-GMP binding." evidence="2">
    <original>R</original>
    <variation>D</variation>
    <location>
        <position position="306"/>
    </location>
</feature>
<feature type="mutagenesis site" description="Wild-type c-di-GMP binding." evidence="2">
    <original>R</original>
    <variation>D</variation>
    <location>
        <position position="364"/>
    </location>
</feature>
<feature type="mutagenesis site" description="No longer binds c-di-GMP, does not complement a bcsE deletion in S.typhimurium 14028." evidence="2">
    <original>R</original>
    <variation>D</variation>
    <location>
        <position position="415"/>
    </location>
</feature>
<feature type="mutagenesis site" description="No longer binds c-di-GMP." evidence="2">
    <original>D</original>
    <variation>R</variation>
    <location>
        <position position="418"/>
    </location>
</feature>
<feature type="strand" evidence="8">
    <location>
        <begin position="8"/>
        <end position="10"/>
    </location>
</feature>
<feature type="turn" evidence="8">
    <location>
        <begin position="18"/>
        <end position="21"/>
    </location>
</feature>
<feature type="strand" evidence="8">
    <location>
        <begin position="22"/>
        <end position="35"/>
    </location>
</feature>
<feature type="helix" evidence="8">
    <location>
        <begin position="36"/>
        <end position="48"/>
    </location>
</feature>
<feature type="strand" evidence="8">
    <location>
        <begin position="56"/>
        <end position="63"/>
    </location>
</feature>
<feature type="helix" evidence="8">
    <location>
        <begin position="65"/>
        <end position="68"/>
    </location>
</feature>
<feature type="strand" evidence="8">
    <location>
        <begin position="73"/>
        <end position="76"/>
    </location>
</feature>
<feature type="strand" evidence="8">
    <location>
        <begin position="80"/>
        <end position="85"/>
    </location>
</feature>
<feature type="helix" evidence="8">
    <location>
        <begin position="89"/>
        <end position="102"/>
    </location>
</feature>
<feature type="strand" evidence="8">
    <location>
        <begin position="109"/>
        <end position="113"/>
    </location>
</feature>
<feature type="helix" evidence="8">
    <location>
        <begin position="118"/>
        <end position="120"/>
    </location>
</feature>
<feature type="helix" evidence="8">
    <location>
        <begin position="124"/>
        <end position="141"/>
    </location>
</feature>
<feature type="strand" evidence="8">
    <location>
        <begin position="144"/>
        <end position="150"/>
    </location>
</feature>
<feature type="helix" evidence="8">
    <location>
        <begin position="155"/>
        <end position="163"/>
    </location>
</feature>
<feature type="turn" evidence="8">
    <location>
        <begin position="164"/>
        <end position="167"/>
    </location>
</feature>
<feature type="strand" evidence="8">
    <location>
        <begin position="169"/>
        <end position="176"/>
    </location>
</feature>
<feature type="strand" evidence="8">
    <location>
        <begin position="178"/>
        <end position="190"/>
    </location>
</feature>
<feature type="strand" evidence="8">
    <location>
        <begin position="193"/>
        <end position="205"/>
    </location>
</feature>
<feature type="strand" evidence="8">
    <location>
        <begin position="208"/>
        <end position="211"/>
    </location>
</feature>
<feature type="strand" evidence="8">
    <location>
        <begin position="224"/>
        <end position="226"/>
    </location>
</feature>
<feature type="strand" evidence="6">
    <location>
        <begin position="228"/>
        <end position="231"/>
    </location>
</feature>
<feature type="helix" evidence="6">
    <location>
        <begin position="232"/>
        <end position="235"/>
    </location>
</feature>
<feature type="strand" evidence="6">
    <location>
        <begin position="245"/>
        <end position="250"/>
    </location>
</feature>
<feature type="helix" evidence="6">
    <location>
        <begin position="251"/>
        <end position="258"/>
    </location>
</feature>
<feature type="strand" evidence="6">
    <location>
        <begin position="265"/>
        <end position="270"/>
    </location>
</feature>
<feature type="helix" evidence="6">
    <location>
        <begin position="273"/>
        <end position="275"/>
    </location>
</feature>
<feature type="helix" evidence="6">
    <location>
        <begin position="276"/>
        <end position="290"/>
    </location>
</feature>
<feature type="strand" evidence="6">
    <location>
        <begin position="295"/>
        <end position="300"/>
    </location>
</feature>
<feature type="helix" evidence="6">
    <location>
        <begin position="307"/>
        <end position="316"/>
    </location>
</feature>
<feature type="strand" evidence="6">
    <location>
        <begin position="319"/>
        <end position="322"/>
    </location>
</feature>
<feature type="strand" evidence="10">
    <location>
        <begin position="324"/>
        <end position="326"/>
    </location>
</feature>
<feature type="helix" evidence="6">
    <location>
        <begin position="328"/>
        <end position="337"/>
    </location>
</feature>
<feature type="turn" evidence="6">
    <location>
        <begin position="338"/>
        <end position="340"/>
    </location>
</feature>
<feature type="helix" evidence="6">
    <location>
        <begin position="351"/>
        <end position="355"/>
    </location>
</feature>
<feature type="turn" evidence="6">
    <location>
        <begin position="356"/>
        <end position="358"/>
    </location>
</feature>
<feature type="helix" evidence="7">
    <location>
        <begin position="360"/>
        <end position="362"/>
    </location>
</feature>
<feature type="helix" evidence="6">
    <location>
        <begin position="369"/>
        <end position="381"/>
    </location>
</feature>
<feature type="strand" evidence="8">
    <location>
        <begin position="383"/>
        <end position="385"/>
    </location>
</feature>
<feature type="strand" evidence="6">
    <location>
        <begin position="391"/>
        <end position="398"/>
    </location>
</feature>
<feature type="helix" evidence="6">
    <location>
        <begin position="404"/>
        <end position="410"/>
    </location>
</feature>
<feature type="strand" evidence="6">
    <location>
        <begin position="418"/>
        <end position="423"/>
    </location>
</feature>
<feature type="strand" evidence="6">
    <location>
        <begin position="426"/>
        <end position="432"/>
    </location>
</feature>
<feature type="helix" evidence="6">
    <location>
        <begin position="436"/>
        <end position="438"/>
    </location>
</feature>
<feature type="helix" evidence="6">
    <location>
        <begin position="439"/>
        <end position="446"/>
    </location>
</feature>
<feature type="helix" evidence="6">
    <location>
        <begin position="451"/>
        <end position="454"/>
    </location>
</feature>
<feature type="strand" evidence="6">
    <location>
        <begin position="455"/>
        <end position="461"/>
    </location>
</feature>
<feature type="helix" evidence="6">
    <location>
        <begin position="464"/>
        <end position="474"/>
    </location>
</feature>
<feature type="strand" evidence="9">
    <location>
        <begin position="475"/>
        <end position="477"/>
    </location>
</feature>
<feature type="helix" evidence="6">
    <location>
        <begin position="479"/>
        <end position="481"/>
    </location>
</feature>
<feature type="helix" evidence="7">
    <location>
        <begin position="486"/>
        <end position="491"/>
    </location>
</feature>
<feature type="strand" evidence="8">
    <location>
        <begin position="495"/>
        <end position="497"/>
    </location>
</feature>
<feature type="strand" evidence="7">
    <location>
        <begin position="498"/>
        <end position="500"/>
    </location>
</feature>
<feature type="strand" evidence="7">
    <location>
        <begin position="502"/>
        <end position="507"/>
    </location>
</feature>
<feature type="strand" evidence="8">
    <location>
        <begin position="510"/>
        <end position="512"/>
    </location>
</feature>
<accession>P37657</accession>
<accession>Q2M7J7</accession>
<gene>
    <name type="primary">bcsE</name>
    <name type="synonym">yhjS</name>
    <name type="ordered locus">b3536</name>
    <name type="ordered locus">JW3504</name>
</gene>